<proteinExistence type="evidence at protein level"/>
<gene>
    <name type="ordered locus">HI_1562</name>
</gene>
<sequence length="52" mass="6035">MLSKDPKVLIKLGELEKDKSKAKKYFGDACDLRSQEGCDKYRELNQKQDTNK</sequence>
<accession>P44254</accession>
<organism>
    <name type="scientific">Haemophilus influenzae (strain ATCC 51907 / DSM 11121 / KW20 / Rd)</name>
    <dbReference type="NCBI Taxonomy" id="71421"/>
    <lineage>
        <taxon>Bacteria</taxon>
        <taxon>Pseudomonadati</taxon>
        <taxon>Pseudomonadota</taxon>
        <taxon>Gammaproteobacteria</taxon>
        <taxon>Pasteurellales</taxon>
        <taxon>Pasteurellaceae</taxon>
        <taxon>Haemophilus</taxon>
    </lineage>
</organism>
<keyword id="KW-1185">Reference proteome</keyword>
<feature type="chain" id="PRO_0000078086" description="Uncharacterized protein HI_1562">
    <location>
        <begin position="1"/>
        <end position="52"/>
    </location>
</feature>
<dbReference type="EMBL" id="L42023">
    <property type="protein sequence ID" value="AAC23220.1"/>
    <property type="molecule type" value="Genomic_DNA"/>
</dbReference>
<dbReference type="PIR" id="C64036">
    <property type="entry name" value="C64036"/>
</dbReference>
<dbReference type="SMR" id="P44254"/>
<dbReference type="STRING" id="71421.HI_1562"/>
<dbReference type="EnsemblBacteria" id="AAC23220">
    <property type="protein sequence ID" value="AAC23220"/>
    <property type="gene ID" value="HI_1562"/>
</dbReference>
<dbReference type="KEGG" id="hin:HI_1562"/>
<dbReference type="HOGENOM" id="CLU_3200448_0_0_6"/>
<dbReference type="Proteomes" id="UP000000579">
    <property type="component" value="Chromosome"/>
</dbReference>
<name>Y1562_HAEIN</name>
<protein>
    <recommendedName>
        <fullName>Uncharacterized protein HI_1562</fullName>
    </recommendedName>
</protein>
<reference key="1">
    <citation type="journal article" date="1995" name="Science">
        <title>Whole-genome random sequencing and assembly of Haemophilus influenzae Rd.</title>
        <authorList>
            <person name="Fleischmann R.D."/>
            <person name="Adams M.D."/>
            <person name="White O."/>
            <person name="Clayton R.A."/>
            <person name="Kirkness E.F."/>
            <person name="Kerlavage A.R."/>
            <person name="Bult C.J."/>
            <person name="Tomb J.-F."/>
            <person name="Dougherty B.A."/>
            <person name="Merrick J.M."/>
            <person name="McKenney K."/>
            <person name="Sutton G.G."/>
            <person name="FitzHugh W."/>
            <person name="Fields C.A."/>
            <person name="Gocayne J.D."/>
            <person name="Scott J.D."/>
            <person name="Shirley R."/>
            <person name="Liu L.-I."/>
            <person name="Glodek A."/>
            <person name="Kelley J.M."/>
            <person name="Weidman J.F."/>
            <person name="Phillips C.A."/>
            <person name="Spriggs T."/>
            <person name="Hedblom E."/>
            <person name="Cotton M.D."/>
            <person name="Utterback T.R."/>
            <person name="Hanna M.C."/>
            <person name="Nguyen D.T."/>
            <person name="Saudek D.M."/>
            <person name="Brandon R.C."/>
            <person name="Fine L.D."/>
            <person name="Fritchman J.L."/>
            <person name="Fuhrmann J.L."/>
            <person name="Geoghagen N.S.M."/>
            <person name="Gnehm C.L."/>
            <person name="McDonald L.A."/>
            <person name="Small K.V."/>
            <person name="Fraser C.M."/>
            <person name="Smith H.O."/>
            <person name="Venter J.C."/>
        </authorList>
    </citation>
    <scope>NUCLEOTIDE SEQUENCE [LARGE SCALE GENOMIC DNA]</scope>
    <source>
        <strain>ATCC 51907 / DSM 11121 / KW20 / Rd</strain>
    </source>
</reference>
<reference key="2">
    <citation type="journal article" date="2000" name="Electrophoresis">
        <title>Two-dimensional map of the proteome of Haemophilus influenzae.</title>
        <authorList>
            <person name="Langen H."/>
            <person name="Takacs B."/>
            <person name="Evers S."/>
            <person name="Berndt P."/>
            <person name="Lahm H.W."/>
            <person name="Wipf B."/>
            <person name="Gray C."/>
            <person name="Fountoulakis M."/>
        </authorList>
    </citation>
    <scope>IDENTIFICATION BY MASS SPECTROMETRY</scope>
    <source>
        <strain>ATCC 51907 / DSM 11121 / KW20 / Rd</strain>
    </source>
</reference>